<sequence>KIVSRWMGSQNNHQQTHPNHHHHLPPLQHHANNYFPMPLSTYYPPDSSVPLPFPSPAGVNSTQAPFNPSQFCFSHRRKRRILFSQAQIYELERRFRQQKYLSAPEREHLATFIGLTPTQVKIWFQNHRYKTKKSKKESKNSPSSSSMTSSSSASNKVASTTHSPKVSSNGGNGSNTTNNNNKPG</sequence>
<reference key="1">
    <citation type="journal article" date="1993" name="Development">
        <title>Lox10, a member of the NK-2 homeobox gene class, is expressed in a segmental pattern in the endoderm and in the cephalic nervous system of the leech Helobdella.</title>
        <authorList>
            <person name="Nardelli-Haefliger D."/>
            <person name="Shankland M."/>
        </authorList>
    </citation>
    <scope>NUCLEOTIDE SEQUENCE [GENOMIC DNA]</scope>
</reference>
<proteinExistence type="evidence at transcript level"/>
<keyword id="KW-0217">Developmental protein</keyword>
<keyword id="KW-0238">DNA-binding</keyword>
<keyword id="KW-0371">Homeobox</keyword>
<keyword id="KW-0539">Nucleus</keyword>
<protein>
    <recommendedName>
        <fullName>Homeobox protein LOX10</fullName>
    </recommendedName>
</protein>
<organism>
    <name type="scientific">Helobdella triserialis</name>
    <name type="common">Leech</name>
    <dbReference type="NCBI Taxonomy" id="6413"/>
    <lineage>
        <taxon>Eukaryota</taxon>
        <taxon>Metazoa</taxon>
        <taxon>Spiralia</taxon>
        <taxon>Lophotrochozoa</taxon>
        <taxon>Annelida</taxon>
        <taxon>Clitellata</taxon>
        <taxon>Hirudinea</taxon>
        <taxon>Rhynchobdellida</taxon>
        <taxon>Glossiphoniidae</taxon>
        <taxon>Helobdella</taxon>
    </lineage>
</organism>
<dbReference type="EMBL" id="Z22635">
    <property type="protein sequence ID" value="CAA80344.1"/>
    <property type="molecule type" value="Genomic_DNA"/>
</dbReference>
<dbReference type="PIR" id="S35751">
    <property type="entry name" value="S35751"/>
</dbReference>
<dbReference type="SMR" id="P42584"/>
<dbReference type="GO" id="GO:0005634">
    <property type="term" value="C:nucleus"/>
    <property type="evidence" value="ECO:0007669"/>
    <property type="project" value="UniProtKB-SubCell"/>
</dbReference>
<dbReference type="GO" id="GO:0000981">
    <property type="term" value="F:DNA-binding transcription factor activity, RNA polymerase II-specific"/>
    <property type="evidence" value="ECO:0007669"/>
    <property type="project" value="InterPro"/>
</dbReference>
<dbReference type="GO" id="GO:0000978">
    <property type="term" value="F:RNA polymerase II cis-regulatory region sequence-specific DNA binding"/>
    <property type="evidence" value="ECO:0007669"/>
    <property type="project" value="TreeGrafter"/>
</dbReference>
<dbReference type="GO" id="GO:0030154">
    <property type="term" value="P:cell differentiation"/>
    <property type="evidence" value="ECO:0007669"/>
    <property type="project" value="TreeGrafter"/>
</dbReference>
<dbReference type="CDD" id="cd00086">
    <property type="entry name" value="homeodomain"/>
    <property type="match status" value="1"/>
</dbReference>
<dbReference type="FunFam" id="1.10.10.60:FF:000706">
    <property type="entry name" value="NK2b"/>
    <property type="match status" value="1"/>
</dbReference>
<dbReference type="Gene3D" id="1.10.10.60">
    <property type="entry name" value="Homeodomain-like"/>
    <property type="match status" value="1"/>
</dbReference>
<dbReference type="InterPro" id="IPR001356">
    <property type="entry name" value="HD"/>
</dbReference>
<dbReference type="InterPro" id="IPR020479">
    <property type="entry name" value="HD_metazoa"/>
</dbReference>
<dbReference type="InterPro" id="IPR017970">
    <property type="entry name" value="Homeobox_CS"/>
</dbReference>
<dbReference type="InterPro" id="IPR050394">
    <property type="entry name" value="Homeobox_NK-like"/>
</dbReference>
<dbReference type="InterPro" id="IPR009057">
    <property type="entry name" value="Homeodomain-like_sf"/>
</dbReference>
<dbReference type="InterPro" id="IPR000047">
    <property type="entry name" value="HTH_motif"/>
</dbReference>
<dbReference type="PANTHER" id="PTHR24340">
    <property type="entry name" value="HOMEOBOX PROTEIN NKX"/>
    <property type="match status" value="1"/>
</dbReference>
<dbReference type="PANTHER" id="PTHR24340:SF41">
    <property type="entry name" value="MUSCLE-SPECIFIC HOMEOBOX PROTEIN TINMAN-RELATED"/>
    <property type="match status" value="1"/>
</dbReference>
<dbReference type="Pfam" id="PF00046">
    <property type="entry name" value="Homeodomain"/>
    <property type="match status" value="1"/>
</dbReference>
<dbReference type="PRINTS" id="PR00024">
    <property type="entry name" value="HOMEOBOX"/>
</dbReference>
<dbReference type="PRINTS" id="PR00031">
    <property type="entry name" value="HTHREPRESSR"/>
</dbReference>
<dbReference type="SMART" id="SM00389">
    <property type="entry name" value="HOX"/>
    <property type="match status" value="1"/>
</dbReference>
<dbReference type="SUPFAM" id="SSF46689">
    <property type="entry name" value="Homeodomain-like"/>
    <property type="match status" value="1"/>
</dbReference>
<dbReference type="PROSITE" id="PS00027">
    <property type="entry name" value="HOMEOBOX_1"/>
    <property type="match status" value="1"/>
</dbReference>
<dbReference type="PROSITE" id="PS50071">
    <property type="entry name" value="HOMEOBOX_2"/>
    <property type="match status" value="1"/>
</dbReference>
<evidence type="ECO:0000255" key="1">
    <source>
        <dbReference type="PROSITE-ProRule" id="PRU00108"/>
    </source>
</evidence>
<evidence type="ECO:0000256" key="2">
    <source>
        <dbReference type="SAM" id="MobiDB-lite"/>
    </source>
</evidence>
<evidence type="ECO:0000305" key="3"/>
<gene>
    <name type="primary">LOX10</name>
</gene>
<accession>P42584</accession>
<comment type="function">
    <text>May play a role in patterning the gut.</text>
</comment>
<comment type="subcellular location">
    <subcellularLocation>
        <location evidence="3">Nucleus</location>
    </subcellularLocation>
</comment>
<comment type="tissue specificity">
    <text>Expressed in a segmental pattern in the endoderm and in the cephalic nervous system.</text>
</comment>
<comment type="similarity">
    <text evidence="3">Belongs to the NK-2 homeobox family.</text>
</comment>
<name>LOX10_HELTR</name>
<feature type="chain" id="PRO_0000049170" description="Homeobox protein LOX10">
    <location>
        <begin position="1" status="less than"/>
        <end position="184"/>
    </location>
</feature>
<feature type="DNA-binding region" description="Homeobox" evidence="1">
    <location>
        <begin position="76"/>
        <end position="135"/>
    </location>
</feature>
<feature type="region of interest" description="Disordered" evidence="2">
    <location>
        <begin position="1"/>
        <end position="29"/>
    </location>
</feature>
<feature type="region of interest" description="Disordered" evidence="2">
    <location>
        <begin position="129"/>
        <end position="184"/>
    </location>
</feature>
<feature type="compositionally biased region" description="Low complexity" evidence="2">
    <location>
        <begin position="140"/>
        <end position="161"/>
    </location>
</feature>
<feature type="compositionally biased region" description="Low complexity" evidence="2">
    <location>
        <begin position="174"/>
        <end position="184"/>
    </location>
</feature>
<feature type="non-terminal residue">
    <location>
        <position position="1"/>
    </location>
</feature>